<sequence length="400" mass="42310">MNKKTIRDVDWAGKRALVRVDFNVPLDDQGQITDDTRIRAALPTIRYLLEHGASVVLMSHLGRPKGKPNPKYSLRPVVERLFELLPEAKEVKKTEAITGPAAEAAVAMLKPGQVLVLENTRFDPREEPNDPAMAAELAKLGDVFVNDAFGTAHRANASTEGVAHYLPAVAGFLMEKELTYIGGALNNPQRPFVTVIGGAKISDKIGVIENLLGKVDALLIGGGMANTFLLAKGLNVGDSLVEPDSVPVAQQLMARAEERGARLLLPVDVVIADAFSADAQRQVVDVSDIPAGWRVLDIGPKTIERYSAEIRAARTVIWNGPMGVFELEPFAVGTRAIAQAMAEAAANGAITIVGGGDSVAAVEQAGLADKMSHVSTGGGASLELLEGRVLPGVAALQDAE</sequence>
<reference key="1">
    <citation type="submission" date="2009-01" db="EMBL/GenBank/DDBJ databases">
        <title>Complete sequence of Chloroflexus sp. Y-400-fl.</title>
        <authorList>
            <consortium name="US DOE Joint Genome Institute"/>
            <person name="Lucas S."/>
            <person name="Copeland A."/>
            <person name="Lapidus A."/>
            <person name="Glavina del Rio T."/>
            <person name="Dalin E."/>
            <person name="Tice H."/>
            <person name="Bruce D."/>
            <person name="Goodwin L."/>
            <person name="Pitluck S."/>
            <person name="Sims D."/>
            <person name="Kiss H."/>
            <person name="Brettin T."/>
            <person name="Detter J.C."/>
            <person name="Han C."/>
            <person name="Larimer F."/>
            <person name="Land M."/>
            <person name="Hauser L."/>
            <person name="Kyrpides N."/>
            <person name="Ovchinnikova G."/>
            <person name="Bryant D.A."/>
            <person name="Richardson P."/>
        </authorList>
    </citation>
    <scope>NUCLEOTIDE SEQUENCE [LARGE SCALE GENOMIC DNA]</scope>
    <source>
        <strain>ATCC 29364 / DSM 637 / Y-400-fl</strain>
    </source>
</reference>
<organism>
    <name type="scientific">Chloroflexus aurantiacus (strain ATCC 29364 / DSM 637 / Y-400-fl)</name>
    <dbReference type="NCBI Taxonomy" id="480224"/>
    <lineage>
        <taxon>Bacteria</taxon>
        <taxon>Bacillati</taxon>
        <taxon>Chloroflexota</taxon>
        <taxon>Chloroflexia</taxon>
        <taxon>Chloroflexales</taxon>
        <taxon>Chloroflexineae</taxon>
        <taxon>Chloroflexaceae</taxon>
        <taxon>Chloroflexus</taxon>
    </lineage>
</organism>
<name>PGK_CHLSY</name>
<protein>
    <recommendedName>
        <fullName evidence="1">Phosphoglycerate kinase</fullName>
        <ecNumber evidence="1">2.7.2.3</ecNumber>
    </recommendedName>
</protein>
<proteinExistence type="inferred from homology"/>
<feature type="chain" id="PRO_1000192816" description="Phosphoglycerate kinase">
    <location>
        <begin position="1"/>
        <end position="400"/>
    </location>
</feature>
<feature type="binding site" evidence="1">
    <location>
        <begin position="21"/>
        <end position="23"/>
    </location>
    <ligand>
        <name>substrate</name>
    </ligand>
</feature>
<feature type="binding site" evidence="1">
    <location>
        <position position="37"/>
    </location>
    <ligand>
        <name>substrate</name>
    </ligand>
</feature>
<feature type="binding site" evidence="1">
    <location>
        <begin position="60"/>
        <end position="63"/>
    </location>
    <ligand>
        <name>substrate</name>
    </ligand>
</feature>
<feature type="binding site" evidence="1">
    <location>
        <position position="121"/>
    </location>
    <ligand>
        <name>substrate</name>
    </ligand>
</feature>
<feature type="binding site" evidence="1">
    <location>
        <position position="154"/>
    </location>
    <ligand>
        <name>substrate</name>
    </ligand>
</feature>
<feature type="binding site" evidence="1">
    <location>
        <position position="204"/>
    </location>
    <ligand>
        <name>ATP</name>
        <dbReference type="ChEBI" id="CHEBI:30616"/>
    </ligand>
</feature>
<feature type="binding site" evidence="1">
    <location>
        <position position="326"/>
    </location>
    <ligand>
        <name>ATP</name>
        <dbReference type="ChEBI" id="CHEBI:30616"/>
    </ligand>
</feature>
<feature type="binding site" evidence="1">
    <location>
        <begin position="355"/>
        <end position="358"/>
    </location>
    <ligand>
        <name>ATP</name>
        <dbReference type="ChEBI" id="CHEBI:30616"/>
    </ligand>
</feature>
<dbReference type="EC" id="2.7.2.3" evidence="1"/>
<dbReference type="EMBL" id="CP001364">
    <property type="protein sequence ID" value="ACM54434.1"/>
    <property type="molecule type" value="Genomic_DNA"/>
</dbReference>
<dbReference type="SMR" id="B9LM50"/>
<dbReference type="KEGG" id="chl:Chy400_3055"/>
<dbReference type="HOGENOM" id="CLU_025427_0_2_0"/>
<dbReference type="OrthoDB" id="9808460at2"/>
<dbReference type="UniPathway" id="UPA00109">
    <property type="reaction ID" value="UER00185"/>
</dbReference>
<dbReference type="GO" id="GO:0005829">
    <property type="term" value="C:cytosol"/>
    <property type="evidence" value="ECO:0007669"/>
    <property type="project" value="TreeGrafter"/>
</dbReference>
<dbReference type="GO" id="GO:0043531">
    <property type="term" value="F:ADP binding"/>
    <property type="evidence" value="ECO:0007669"/>
    <property type="project" value="TreeGrafter"/>
</dbReference>
<dbReference type="GO" id="GO:0005524">
    <property type="term" value="F:ATP binding"/>
    <property type="evidence" value="ECO:0007669"/>
    <property type="project" value="UniProtKB-KW"/>
</dbReference>
<dbReference type="GO" id="GO:0004618">
    <property type="term" value="F:phosphoglycerate kinase activity"/>
    <property type="evidence" value="ECO:0007669"/>
    <property type="project" value="UniProtKB-UniRule"/>
</dbReference>
<dbReference type="GO" id="GO:0006094">
    <property type="term" value="P:gluconeogenesis"/>
    <property type="evidence" value="ECO:0007669"/>
    <property type="project" value="TreeGrafter"/>
</dbReference>
<dbReference type="GO" id="GO:0006096">
    <property type="term" value="P:glycolytic process"/>
    <property type="evidence" value="ECO:0007669"/>
    <property type="project" value="UniProtKB-UniRule"/>
</dbReference>
<dbReference type="CDD" id="cd00318">
    <property type="entry name" value="Phosphoglycerate_kinase"/>
    <property type="match status" value="1"/>
</dbReference>
<dbReference type="FunFam" id="3.40.50.1260:FF:000002">
    <property type="entry name" value="Phosphoglycerate kinase"/>
    <property type="match status" value="1"/>
</dbReference>
<dbReference type="FunFam" id="3.40.50.1260:FF:000007">
    <property type="entry name" value="Phosphoglycerate kinase"/>
    <property type="match status" value="1"/>
</dbReference>
<dbReference type="Gene3D" id="3.40.50.1260">
    <property type="entry name" value="Phosphoglycerate kinase, N-terminal domain"/>
    <property type="match status" value="2"/>
</dbReference>
<dbReference type="HAMAP" id="MF_00145">
    <property type="entry name" value="Phosphoglyc_kinase"/>
    <property type="match status" value="1"/>
</dbReference>
<dbReference type="InterPro" id="IPR001576">
    <property type="entry name" value="Phosphoglycerate_kinase"/>
</dbReference>
<dbReference type="InterPro" id="IPR015824">
    <property type="entry name" value="Phosphoglycerate_kinase_N"/>
</dbReference>
<dbReference type="InterPro" id="IPR036043">
    <property type="entry name" value="Phosphoglycerate_kinase_sf"/>
</dbReference>
<dbReference type="PANTHER" id="PTHR11406">
    <property type="entry name" value="PHOSPHOGLYCERATE KINASE"/>
    <property type="match status" value="1"/>
</dbReference>
<dbReference type="PANTHER" id="PTHR11406:SF23">
    <property type="entry name" value="PHOSPHOGLYCERATE KINASE 1, CHLOROPLASTIC-RELATED"/>
    <property type="match status" value="1"/>
</dbReference>
<dbReference type="Pfam" id="PF00162">
    <property type="entry name" value="PGK"/>
    <property type="match status" value="1"/>
</dbReference>
<dbReference type="PIRSF" id="PIRSF000724">
    <property type="entry name" value="Pgk"/>
    <property type="match status" value="1"/>
</dbReference>
<dbReference type="PRINTS" id="PR00477">
    <property type="entry name" value="PHGLYCKINASE"/>
</dbReference>
<dbReference type="SUPFAM" id="SSF53748">
    <property type="entry name" value="Phosphoglycerate kinase"/>
    <property type="match status" value="1"/>
</dbReference>
<keyword id="KW-0067">ATP-binding</keyword>
<keyword id="KW-0963">Cytoplasm</keyword>
<keyword id="KW-0324">Glycolysis</keyword>
<keyword id="KW-0418">Kinase</keyword>
<keyword id="KW-0547">Nucleotide-binding</keyword>
<keyword id="KW-0808">Transferase</keyword>
<evidence type="ECO:0000255" key="1">
    <source>
        <dbReference type="HAMAP-Rule" id="MF_00145"/>
    </source>
</evidence>
<gene>
    <name evidence="1" type="primary">pgk</name>
    <name type="ordered locus">Chy400_3055</name>
</gene>
<accession>B9LM50</accession>
<comment type="catalytic activity">
    <reaction evidence="1">
        <text>(2R)-3-phosphoglycerate + ATP = (2R)-3-phospho-glyceroyl phosphate + ADP</text>
        <dbReference type="Rhea" id="RHEA:14801"/>
        <dbReference type="ChEBI" id="CHEBI:30616"/>
        <dbReference type="ChEBI" id="CHEBI:57604"/>
        <dbReference type="ChEBI" id="CHEBI:58272"/>
        <dbReference type="ChEBI" id="CHEBI:456216"/>
        <dbReference type="EC" id="2.7.2.3"/>
    </reaction>
</comment>
<comment type="pathway">
    <text evidence="1">Carbohydrate degradation; glycolysis; pyruvate from D-glyceraldehyde 3-phosphate: step 2/5.</text>
</comment>
<comment type="subunit">
    <text evidence="1">Monomer.</text>
</comment>
<comment type="subcellular location">
    <subcellularLocation>
        <location evidence="1">Cytoplasm</location>
    </subcellularLocation>
</comment>
<comment type="similarity">
    <text evidence="1">Belongs to the phosphoglycerate kinase family.</text>
</comment>